<name>TRMB_AGRFC</name>
<comment type="function">
    <text evidence="2">Catalyzes the formation of N(7)-methylguanine at position 46 (m7G46) in tRNA.</text>
</comment>
<comment type="catalytic activity">
    <reaction evidence="2">
        <text>guanosine(46) in tRNA + S-adenosyl-L-methionine = N(7)-methylguanosine(46) in tRNA + S-adenosyl-L-homocysteine</text>
        <dbReference type="Rhea" id="RHEA:42708"/>
        <dbReference type="Rhea" id="RHEA-COMP:10188"/>
        <dbReference type="Rhea" id="RHEA-COMP:10189"/>
        <dbReference type="ChEBI" id="CHEBI:57856"/>
        <dbReference type="ChEBI" id="CHEBI:59789"/>
        <dbReference type="ChEBI" id="CHEBI:74269"/>
        <dbReference type="ChEBI" id="CHEBI:74480"/>
        <dbReference type="EC" id="2.1.1.33"/>
    </reaction>
</comment>
<comment type="pathway">
    <text evidence="2">tRNA modification; N(7)-methylguanine-tRNA biosynthesis.</text>
</comment>
<comment type="similarity">
    <text evidence="2">Belongs to the class I-like SAM-binding methyltransferase superfamily. TrmB family.</text>
</comment>
<keyword id="KW-0489">Methyltransferase</keyword>
<keyword id="KW-1185">Reference proteome</keyword>
<keyword id="KW-0949">S-adenosyl-L-methionine</keyword>
<keyword id="KW-0808">Transferase</keyword>
<keyword id="KW-0819">tRNA processing</keyword>
<accession>Q8UID4</accession>
<dbReference type="EC" id="2.1.1.33" evidence="2"/>
<dbReference type="EMBL" id="AE007869">
    <property type="protein sequence ID" value="AAK86180.1"/>
    <property type="molecule type" value="Genomic_DNA"/>
</dbReference>
<dbReference type="PIR" id="AC2621">
    <property type="entry name" value="AC2621"/>
</dbReference>
<dbReference type="PIR" id="C97403">
    <property type="entry name" value="C97403"/>
</dbReference>
<dbReference type="RefSeq" id="NP_353395.1">
    <property type="nucleotide sequence ID" value="NC_003062.2"/>
</dbReference>
<dbReference type="RefSeq" id="WP_006310208.1">
    <property type="nucleotide sequence ID" value="NC_003062.2"/>
</dbReference>
<dbReference type="SMR" id="Q8UID4"/>
<dbReference type="STRING" id="176299.Atu0363"/>
<dbReference type="EnsemblBacteria" id="AAK86180">
    <property type="protein sequence ID" value="AAK86180"/>
    <property type="gene ID" value="Atu0363"/>
</dbReference>
<dbReference type="GeneID" id="1132401"/>
<dbReference type="KEGG" id="atu:Atu0363"/>
<dbReference type="PATRIC" id="fig|176299.10.peg.354"/>
<dbReference type="eggNOG" id="COG0220">
    <property type="taxonomic scope" value="Bacteria"/>
</dbReference>
<dbReference type="HOGENOM" id="CLU_050910_0_3_5"/>
<dbReference type="OrthoDB" id="9802090at2"/>
<dbReference type="PhylomeDB" id="Q8UID4"/>
<dbReference type="BioCyc" id="AGRO:ATU0363-MONOMER"/>
<dbReference type="UniPathway" id="UPA00989"/>
<dbReference type="Proteomes" id="UP000000813">
    <property type="component" value="Chromosome circular"/>
</dbReference>
<dbReference type="GO" id="GO:0043527">
    <property type="term" value="C:tRNA methyltransferase complex"/>
    <property type="evidence" value="ECO:0007669"/>
    <property type="project" value="TreeGrafter"/>
</dbReference>
<dbReference type="GO" id="GO:0008176">
    <property type="term" value="F:tRNA (guanine(46)-N7)-methyltransferase activity"/>
    <property type="evidence" value="ECO:0007669"/>
    <property type="project" value="UniProtKB-UniRule"/>
</dbReference>
<dbReference type="CDD" id="cd02440">
    <property type="entry name" value="AdoMet_MTases"/>
    <property type="match status" value="1"/>
</dbReference>
<dbReference type="Gene3D" id="3.40.50.150">
    <property type="entry name" value="Vaccinia Virus protein VP39"/>
    <property type="match status" value="1"/>
</dbReference>
<dbReference type="HAMAP" id="MF_01057">
    <property type="entry name" value="tRNA_methyltr_TrmB"/>
    <property type="match status" value="1"/>
</dbReference>
<dbReference type="InterPro" id="IPR029063">
    <property type="entry name" value="SAM-dependent_MTases_sf"/>
</dbReference>
<dbReference type="InterPro" id="IPR003358">
    <property type="entry name" value="tRNA_(Gua-N-7)_MeTrfase_Trmb"/>
</dbReference>
<dbReference type="InterPro" id="IPR055361">
    <property type="entry name" value="tRNA_methyltr_TrmB_bact"/>
</dbReference>
<dbReference type="NCBIfam" id="TIGR00091">
    <property type="entry name" value="tRNA (guanosine(46)-N7)-methyltransferase TrmB"/>
    <property type="match status" value="1"/>
</dbReference>
<dbReference type="PANTHER" id="PTHR23417">
    <property type="entry name" value="3-DEOXY-D-MANNO-OCTULOSONIC-ACID TRANSFERASE/TRNA GUANINE-N 7 - -METHYLTRANSFERASE"/>
    <property type="match status" value="1"/>
</dbReference>
<dbReference type="PANTHER" id="PTHR23417:SF14">
    <property type="entry name" value="PENTACOTRIPEPTIDE-REPEAT REGION OF PRORP DOMAIN-CONTAINING PROTEIN"/>
    <property type="match status" value="1"/>
</dbReference>
<dbReference type="Pfam" id="PF02390">
    <property type="entry name" value="Methyltransf_4"/>
    <property type="match status" value="1"/>
</dbReference>
<dbReference type="SUPFAM" id="SSF53335">
    <property type="entry name" value="S-adenosyl-L-methionine-dependent methyltransferases"/>
    <property type="match status" value="1"/>
</dbReference>
<dbReference type="PROSITE" id="PS51625">
    <property type="entry name" value="SAM_MT_TRMB"/>
    <property type="match status" value="1"/>
</dbReference>
<protein>
    <recommendedName>
        <fullName evidence="2">tRNA (guanine-N(7)-)-methyltransferase</fullName>
        <ecNumber evidence="2">2.1.1.33</ecNumber>
    </recommendedName>
    <alternativeName>
        <fullName evidence="2">tRNA (guanine(46)-N(7))-methyltransferase</fullName>
    </alternativeName>
    <alternativeName>
        <fullName evidence="2">tRNA(m7G46)-methyltransferase</fullName>
    </alternativeName>
</protein>
<feature type="chain" id="PRO_0000171284" description="tRNA (guanine-N(7)-)-methyltransferase">
    <location>
        <begin position="1"/>
        <end position="232"/>
    </location>
</feature>
<feature type="active site" evidence="1">
    <location>
        <position position="137"/>
    </location>
</feature>
<feature type="binding site" evidence="2">
    <location>
        <position position="63"/>
    </location>
    <ligand>
        <name>S-adenosyl-L-methionine</name>
        <dbReference type="ChEBI" id="CHEBI:59789"/>
    </ligand>
</feature>
<feature type="binding site" evidence="2">
    <location>
        <position position="88"/>
    </location>
    <ligand>
        <name>S-adenosyl-L-methionine</name>
        <dbReference type="ChEBI" id="CHEBI:59789"/>
    </ligand>
</feature>
<feature type="binding site" evidence="2">
    <location>
        <position position="115"/>
    </location>
    <ligand>
        <name>S-adenosyl-L-methionine</name>
        <dbReference type="ChEBI" id="CHEBI:59789"/>
    </ligand>
</feature>
<feature type="binding site" evidence="2">
    <location>
        <position position="137"/>
    </location>
    <ligand>
        <name>S-adenosyl-L-methionine</name>
        <dbReference type="ChEBI" id="CHEBI:59789"/>
    </ligand>
</feature>
<feature type="binding site" evidence="2">
    <location>
        <position position="141"/>
    </location>
    <ligand>
        <name>substrate</name>
    </ligand>
</feature>
<feature type="binding site" evidence="2">
    <location>
        <position position="173"/>
    </location>
    <ligand>
        <name>substrate</name>
    </ligand>
</feature>
<feature type="binding site" evidence="2">
    <location>
        <begin position="211"/>
        <end position="214"/>
    </location>
    <ligand>
        <name>substrate</name>
    </ligand>
</feature>
<gene>
    <name evidence="2" type="primary">trmB</name>
    <name type="ordered locus">Atu0363</name>
    <name type="ORF">AGR_C_634</name>
</gene>
<reference key="1">
    <citation type="journal article" date="2001" name="Science">
        <title>The genome of the natural genetic engineer Agrobacterium tumefaciens C58.</title>
        <authorList>
            <person name="Wood D.W."/>
            <person name="Setubal J.C."/>
            <person name="Kaul R."/>
            <person name="Monks D.E."/>
            <person name="Kitajima J.P."/>
            <person name="Okura V.K."/>
            <person name="Zhou Y."/>
            <person name="Chen L."/>
            <person name="Wood G.E."/>
            <person name="Almeida N.F. Jr."/>
            <person name="Woo L."/>
            <person name="Chen Y."/>
            <person name="Paulsen I.T."/>
            <person name="Eisen J.A."/>
            <person name="Karp P.D."/>
            <person name="Bovee D. Sr."/>
            <person name="Chapman P."/>
            <person name="Clendenning J."/>
            <person name="Deatherage G."/>
            <person name="Gillet W."/>
            <person name="Grant C."/>
            <person name="Kutyavin T."/>
            <person name="Levy R."/>
            <person name="Li M.-J."/>
            <person name="McClelland E."/>
            <person name="Palmieri A."/>
            <person name="Raymond C."/>
            <person name="Rouse G."/>
            <person name="Saenphimmachak C."/>
            <person name="Wu Z."/>
            <person name="Romero P."/>
            <person name="Gordon D."/>
            <person name="Zhang S."/>
            <person name="Yoo H."/>
            <person name="Tao Y."/>
            <person name="Biddle P."/>
            <person name="Jung M."/>
            <person name="Krespan W."/>
            <person name="Perry M."/>
            <person name="Gordon-Kamm B."/>
            <person name="Liao L."/>
            <person name="Kim S."/>
            <person name="Hendrick C."/>
            <person name="Zhao Z.-Y."/>
            <person name="Dolan M."/>
            <person name="Chumley F."/>
            <person name="Tingey S.V."/>
            <person name="Tomb J.-F."/>
            <person name="Gordon M.P."/>
            <person name="Olson M.V."/>
            <person name="Nester E.W."/>
        </authorList>
    </citation>
    <scope>NUCLEOTIDE SEQUENCE [LARGE SCALE GENOMIC DNA]</scope>
    <source>
        <strain>C58 / ATCC 33970</strain>
    </source>
</reference>
<reference key="2">
    <citation type="journal article" date="2001" name="Science">
        <title>Genome sequence of the plant pathogen and biotechnology agent Agrobacterium tumefaciens C58.</title>
        <authorList>
            <person name="Goodner B."/>
            <person name="Hinkle G."/>
            <person name="Gattung S."/>
            <person name="Miller N."/>
            <person name="Blanchard M."/>
            <person name="Qurollo B."/>
            <person name="Goldman B.S."/>
            <person name="Cao Y."/>
            <person name="Askenazi M."/>
            <person name="Halling C."/>
            <person name="Mullin L."/>
            <person name="Houmiel K."/>
            <person name="Gordon J."/>
            <person name="Vaudin M."/>
            <person name="Iartchouk O."/>
            <person name="Epp A."/>
            <person name="Liu F."/>
            <person name="Wollam C."/>
            <person name="Allinger M."/>
            <person name="Doughty D."/>
            <person name="Scott C."/>
            <person name="Lappas C."/>
            <person name="Markelz B."/>
            <person name="Flanagan C."/>
            <person name="Crowell C."/>
            <person name="Gurson J."/>
            <person name="Lomo C."/>
            <person name="Sear C."/>
            <person name="Strub G."/>
            <person name="Cielo C."/>
            <person name="Slater S."/>
        </authorList>
    </citation>
    <scope>NUCLEOTIDE SEQUENCE [LARGE SCALE GENOMIC DNA]</scope>
    <source>
        <strain>C58 / ATCC 33970</strain>
    </source>
</reference>
<evidence type="ECO:0000250" key="1"/>
<evidence type="ECO:0000255" key="2">
    <source>
        <dbReference type="HAMAP-Rule" id="MF_01057"/>
    </source>
</evidence>
<sequence>MTEERRSRATEAFFGRRKGKPLRNQQVDTIENLLPLLKIDLESVPPQNLVALFPADVRSIRLEIGFGGGEHLAHRAVENPETGFIGVEPFVNSMAKLLATVRERELMNIRLYDDDATQLLDWLPEGSIDHIDLLYPDPWPKKKHWKRRFVSDVNLARFHRVLKPGGKFCFASDIDTYVNWTLQHCARHGGFEWTATSADDWRTPYANWPGTRYENKAKREGRSSAYLTFIRR</sequence>
<proteinExistence type="inferred from homology"/>
<organism>
    <name type="scientific">Agrobacterium fabrum (strain C58 / ATCC 33970)</name>
    <name type="common">Agrobacterium tumefaciens (strain C58)</name>
    <dbReference type="NCBI Taxonomy" id="176299"/>
    <lineage>
        <taxon>Bacteria</taxon>
        <taxon>Pseudomonadati</taxon>
        <taxon>Pseudomonadota</taxon>
        <taxon>Alphaproteobacteria</taxon>
        <taxon>Hyphomicrobiales</taxon>
        <taxon>Rhizobiaceae</taxon>
        <taxon>Rhizobium/Agrobacterium group</taxon>
        <taxon>Agrobacterium</taxon>
        <taxon>Agrobacterium tumefaciens complex</taxon>
    </lineage>
</organism>